<evidence type="ECO:0000255" key="1">
    <source>
        <dbReference type="HAMAP-Rule" id="MF_00238"/>
    </source>
</evidence>
<accession>A4W254</accession>
<sequence length="225" mass="24717">MKSIQIAIDGPASSGKSTVAKIIAKNLGYTYLDTGAMYRSATYLALTNGIEVTDQNRIVDLLAQYPIRFGRDENGQQLVFVGDEDVTLPIRDNQVTNNVSAVAALPLVREELVRLQQDIAQAGGIVMDGRDIGTVVLPQAELKIFLVASVEERALRRFKENTERGIETDLESLKEEIAARDYKDSNREVSPLKAADDAITFDTTGVSIEGVVKFISEKAKEILDR</sequence>
<proteinExistence type="inferred from homology"/>
<keyword id="KW-0067">ATP-binding</keyword>
<keyword id="KW-0963">Cytoplasm</keyword>
<keyword id="KW-0418">Kinase</keyword>
<keyword id="KW-0547">Nucleotide-binding</keyword>
<keyword id="KW-0808">Transferase</keyword>
<protein>
    <recommendedName>
        <fullName evidence="1">Cytidylate kinase</fullName>
        <shortName evidence="1">CK</shortName>
        <ecNumber evidence="1">2.7.4.25</ecNumber>
    </recommendedName>
    <alternativeName>
        <fullName evidence="1">Cytidine monophosphate kinase</fullName>
        <shortName evidence="1">CMP kinase</shortName>
    </alternativeName>
</protein>
<gene>
    <name evidence="1" type="primary">cmk</name>
    <name type="ordered locus">SSU98_1285</name>
</gene>
<reference key="1">
    <citation type="journal article" date="2007" name="PLoS ONE">
        <title>A glimpse of streptococcal toxic shock syndrome from comparative genomics of S. suis 2 Chinese isolates.</title>
        <authorList>
            <person name="Chen C."/>
            <person name="Tang J."/>
            <person name="Dong W."/>
            <person name="Wang C."/>
            <person name="Feng Y."/>
            <person name="Wang J."/>
            <person name="Zheng F."/>
            <person name="Pan X."/>
            <person name="Liu D."/>
            <person name="Li M."/>
            <person name="Song Y."/>
            <person name="Zhu X."/>
            <person name="Sun H."/>
            <person name="Feng T."/>
            <person name="Guo Z."/>
            <person name="Ju A."/>
            <person name="Ge J."/>
            <person name="Dong Y."/>
            <person name="Sun W."/>
            <person name="Jiang Y."/>
            <person name="Wang J."/>
            <person name="Yan J."/>
            <person name="Yang H."/>
            <person name="Wang X."/>
            <person name="Gao G.F."/>
            <person name="Yang R."/>
            <person name="Wang J."/>
            <person name="Yu J."/>
        </authorList>
    </citation>
    <scope>NUCLEOTIDE SEQUENCE [LARGE SCALE GENOMIC DNA]</scope>
    <source>
        <strain>98HAH33</strain>
    </source>
</reference>
<comment type="catalytic activity">
    <reaction evidence="1">
        <text>CMP + ATP = CDP + ADP</text>
        <dbReference type="Rhea" id="RHEA:11600"/>
        <dbReference type="ChEBI" id="CHEBI:30616"/>
        <dbReference type="ChEBI" id="CHEBI:58069"/>
        <dbReference type="ChEBI" id="CHEBI:60377"/>
        <dbReference type="ChEBI" id="CHEBI:456216"/>
        <dbReference type="EC" id="2.7.4.25"/>
    </reaction>
</comment>
<comment type="catalytic activity">
    <reaction evidence="1">
        <text>dCMP + ATP = dCDP + ADP</text>
        <dbReference type="Rhea" id="RHEA:25094"/>
        <dbReference type="ChEBI" id="CHEBI:30616"/>
        <dbReference type="ChEBI" id="CHEBI:57566"/>
        <dbReference type="ChEBI" id="CHEBI:58593"/>
        <dbReference type="ChEBI" id="CHEBI:456216"/>
        <dbReference type="EC" id="2.7.4.25"/>
    </reaction>
</comment>
<comment type="subcellular location">
    <subcellularLocation>
        <location evidence="1">Cytoplasm</location>
    </subcellularLocation>
</comment>
<comment type="similarity">
    <text evidence="1">Belongs to the cytidylate kinase family. Type 1 subfamily.</text>
</comment>
<name>KCY_STRS2</name>
<dbReference type="EC" id="2.7.4.25" evidence="1"/>
<dbReference type="EMBL" id="CP000408">
    <property type="protein sequence ID" value="ABP92443.1"/>
    <property type="molecule type" value="Genomic_DNA"/>
</dbReference>
<dbReference type="SMR" id="A4W254"/>
<dbReference type="KEGG" id="ssv:SSU98_1285"/>
<dbReference type="HOGENOM" id="CLU_079959_0_2_9"/>
<dbReference type="GO" id="GO:0005829">
    <property type="term" value="C:cytosol"/>
    <property type="evidence" value="ECO:0007669"/>
    <property type="project" value="TreeGrafter"/>
</dbReference>
<dbReference type="GO" id="GO:0005524">
    <property type="term" value="F:ATP binding"/>
    <property type="evidence" value="ECO:0007669"/>
    <property type="project" value="UniProtKB-UniRule"/>
</dbReference>
<dbReference type="GO" id="GO:0036430">
    <property type="term" value="F:CMP kinase activity"/>
    <property type="evidence" value="ECO:0007669"/>
    <property type="project" value="RHEA"/>
</dbReference>
<dbReference type="GO" id="GO:0036431">
    <property type="term" value="F:dCMP kinase activity"/>
    <property type="evidence" value="ECO:0007669"/>
    <property type="project" value="RHEA"/>
</dbReference>
<dbReference type="GO" id="GO:0015949">
    <property type="term" value="P:nucleobase-containing small molecule interconversion"/>
    <property type="evidence" value="ECO:0007669"/>
    <property type="project" value="TreeGrafter"/>
</dbReference>
<dbReference type="GO" id="GO:0006220">
    <property type="term" value="P:pyrimidine nucleotide metabolic process"/>
    <property type="evidence" value="ECO:0007669"/>
    <property type="project" value="UniProtKB-UniRule"/>
</dbReference>
<dbReference type="CDD" id="cd02020">
    <property type="entry name" value="CMPK"/>
    <property type="match status" value="1"/>
</dbReference>
<dbReference type="FunFam" id="3.40.50.300:FF:000484">
    <property type="entry name" value="Cytidylate kinase"/>
    <property type="match status" value="1"/>
</dbReference>
<dbReference type="Gene3D" id="3.40.50.300">
    <property type="entry name" value="P-loop containing nucleotide triphosphate hydrolases"/>
    <property type="match status" value="1"/>
</dbReference>
<dbReference type="HAMAP" id="MF_00238">
    <property type="entry name" value="Cytidyl_kinase_type1"/>
    <property type="match status" value="1"/>
</dbReference>
<dbReference type="InterPro" id="IPR003136">
    <property type="entry name" value="Cytidylate_kin"/>
</dbReference>
<dbReference type="InterPro" id="IPR011994">
    <property type="entry name" value="Cytidylate_kinase_dom"/>
</dbReference>
<dbReference type="InterPro" id="IPR027417">
    <property type="entry name" value="P-loop_NTPase"/>
</dbReference>
<dbReference type="NCBIfam" id="TIGR00017">
    <property type="entry name" value="cmk"/>
    <property type="match status" value="1"/>
</dbReference>
<dbReference type="PANTHER" id="PTHR21299:SF2">
    <property type="entry name" value="CYTIDYLATE KINASE"/>
    <property type="match status" value="1"/>
</dbReference>
<dbReference type="PANTHER" id="PTHR21299">
    <property type="entry name" value="CYTIDYLATE KINASE/PANTOATE-BETA-ALANINE LIGASE"/>
    <property type="match status" value="1"/>
</dbReference>
<dbReference type="Pfam" id="PF02224">
    <property type="entry name" value="Cytidylate_kin"/>
    <property type="match status" value="1"/>
</dbReference>
<dbReference type="SUPFAM" id="SSF52540">
    <property type="entry name" value="P-loop containing nucleoside triphosphate hydrolases"/>
    <property type="match status" value="1"/>
</dbReference>
<organism>
    <name type="scientific">Streptococcus suis (strain 98HAH33)</name>
    <dbReference type="NCBI Taxonomy" id="391296"/>
    <lineage>
        <taxon>Bacteria</taxon>
        <taxon>Bacillati</taxon>
        <taxon>Bacillota</taxon>
        <taxon>Bacilli</taxon>
        <taxon>Lactobacillales</taxon>
        <taxon>Streptococcaceae</taxon>
        <taxon>Streptococcus</taxon>
    </lineage>
</organism>
<feature type="chain" id="PRO_1000048301" description="Cytidylate kinase">
    <location>
        <begin position="1"/>
        <end position="225"/>
    </location>
</feature>
<feature type="binding site" evidence="1">
    <location>
        <begin position="10"/>
        <end position="18"/>
    </location>
    <ligand>
        <name>ATP</name>
        <dbReference type="ChEBI" id="CHEBI:30616"/>
    </ligand>
</feature>